<keyword id="KW-0963">Cytoplasm</keyword>
<keyword id="KW-0255">Endonuclease</keyword>
<keyword id="KW-0378">Hydrolase</keyword>
<keyword id="KW-0460">Magnesium</keyword>
<keyword id="KW-0479">Metal-binding</keyword>
<keyword id="KW-0507">mRNA processing</keyword>
<keyword id="KW-0540">Nuclease</keyword>
<keyword id="KW-0694">RNA-binding</keyword>
<keyword id="KW-0698">rRNA processing</keyword>
<keyword id="KW-0699">rRNA-binding</keyword>
<keyword id="KW-0819">tRNA processing</keyword>
<organism>
    <name type="scientific">Shewanella sp. (strain MR-7)</name>
    <dbReference type="NCBI Taxonomy" id="60481"/>
    <lineage>
        <taxon>Bacteria</taxon>
        <taxon>Pseudomonadati</taxon>
        <taxon>Pseudomonadota</taxon>
        <taxon>Gammaproteobacteria</taxon>
        <taxon>Alteromonadales</taxon>
        <taxon>Shewanellaceae</taxon>
        <taxon>Shewanella</taxon>
    </lineage>
</organism>
<dbReference type="EC" id="3.1.26.3" evidence="1"/>
<dbReference type="EMBL" id="CP000444">
    <property type="protein sequence ID" value="ABI43914.1"/>
    <property type="molecule type" value="Genomic_DNA"/>
</dbReference>
<dbReference type="SMR" id="Q0HSJ1"/>
<dbReference type="KEGG" id="shm:Shewmr7_2930"/>
<dbReference type="HOGENOM" id="CLU_000907_1_1_6"/>
<dbReference type="GO" id="GO:0005737">
    <property type="term" value="C:cytoplasm"/>
    <property type="evidence" value="ECO:0007669"/>
    <property type="project" value="UniProtKB-SubCell"/>
</dbReference>
<dbReference type="GO" id="GO:0003725">
    <property type="term" value="F:double-stranded RNA binding"/>
    <property type="evidence" value="ECO:0007669"/>
    <property type="project" value="TreeGrafter"/>
</dbReference>
<dbReference type="GO" id="GO:0046872">
    <property type="term" value="F:metal ion binding"/>
    <property type="evidence" value="ECO:0007669"/>
    <property type="project" value="UniProtKB-KW"/>
</dbReference>
<dbReference type="GO" id="GO:0004525">
    <property type="term" value="F:ribonuclease III activity"/>
    <property type="evidence" value="ECO:0007669"/>
    <property type="project" value="UniProtKB-UniRule"/>
</dbReference>
<dbReference type="GO" id="GO:0019843">
    <property type="term" value="F:rRNA binding"/>
    <property type="evidence" value="ECO:0007669"/>
    <property type="project" value="UniProtKB-KW"/>
</dbReference>
<dbReference type="GO" id="GO:0006397">
    <property type="term" value="P:mRNA processing"/>
    <property type="evidence" value="ECO:0007669"/>
    <property type="project" value="UniProtKB-UniRule"/>
</dbReference>
<dbReference type="GO" id="GO:0010468">
    <property type="term" value="P:regulation of gene expression"/>
    <property type="evidence" value="ECO:0007669"/>
    <property type="project" value="TreeGrafter"/>
</dbReference>
<dbReference type="GO" id="GO:0006364">
    <property type="term" value="P:rRNA processing"/>
    <property type="evidence" value="ECO:0007669"/>
    <property type="project" value="UniProtKB-UniRule"/>
</dbReference>
<dbReference type="GO" id="GO:0008033">
    <property type="term" value="P:tRNA processing"/>
    <property type="evidence" value="ECO:0007669"/>
    <property type="project" value="UniProtKB-KW"/>
</dbReference>
<dbReference type="CDD" id="cd10845">
    <property type="entry name" value="DSRM_RNAse_III_family"/>
    <property type="match status" value="1"/>
</dbReference>
<dbReference type="CDD" id="cd00593">
    <property type="entry name" value="RIBOc"/>
    <property type="match status" value="1"/>
</dbReference>
<dbReference type="FunFam" id="1.10.1520.10:FF:000001">
    <property type="entry name" value="Ribonuclease 3"/>
    <property type="match status" value="1"/>
</dbReference>
<dbReference type="FunFam" id="3.30.160.20:FF:000003">
    <property type="entry name" value="Ribonuclease 3"/>
    <property type="match status" value="1"/>
</dbReference>
<dbReference type="Gene3D" id="3.30.160.20">
    <property type="match status" value="1"/>
</dbReference>
<dbReference type="Gene3D" id="1.10.1520.10">
    <property type="entry name" value="Ribonuclease III domain"/>
    <property type="match status" value="1"/>
</dbReference>
<dbReference type="HAMAP" id="MF_00104">
    <property type="entry name" value="RNase_III"/>
    <property type="match status" value="1"/>
</dbReference>
<dbReference type="InterPro" id="IPR014720">
    <property type="entry name" value="dsRBD_dom"/>
</dbReference>
<dbReference type="InterPro" id="IPR011907">
    <property type="entry name" value="RNase_III"/>
</dbReference>
<dbReference type="InterPro" id="IPR000999">
    <property type="entry name" value="RNase_III_dom"/>
</dbReference>
<dbReference type="InterPro" id="IPR036389">
    <property type="entry name" value="RNase_III_sf"/>
</dbReference>
<dbReference type="NCBIfam" id="TIGR02191">
    <property type="entry name" value="RNaseIII"/>
    <property type="match status" value="1"/>
</dbReference>
<dbReference type="PANTHER" id="PTHR11207:SF0">
    <property type="entry name" value="RIBONUCLEASE 3"/>
    <property type="match status" value="1"/>
</dbReference>
<dbReference type="PANTHER" id="PTHR11207">
    <property type="entry name" value="RIBONUCLEASE III"/>
    <property type="match status" value="1"/>
</dbReference>
<dbReference type="Pfam" id="PF00035">
    <property type="entry name" value="dsrm"/>
    <property type="match status" value="1"/>
</dbReference>
<dbReference type="Pfam" id="PF14622">
    <property type="entry name" value="Ribonucleas_3_3"/>
    <property type="match status" value="1"/>
</dbReference>
<dbReference type="SMART" id="SM00358">
    <property type="entry name" value="DSRM"/>
    <property type="match status" value="1"/>
</dbReference>
<dbReference type="SMART" id="SM00535">
    <property type="entry name" value="RIBOc"/>
    <property type="match status" value="1"/>
</dbReference>
<dbReference type="SUPFAM" id="SSF54768">
    <property type="entry name" value="dsRNA-binding domain-like"/>
    <property type="match status" value="1"/>
</dbReference>
<dbReference type="SUPFAM" id="SSF69065">
    <property type="entry name" value="RNase III domain-like"/>
    <property type="match status" value="1"/>
</dbReference>
<dbReference type="PROSITE" id="PS50137">
    <property type="entry name" value="DS_RBD"/>
    <property type="match status" value="1"/>
</dbReference>
<dbReference type="PROSITE" id="PS00517">
    <property type="entry name" value="RNASE_3_1"/>
    <property type="match status" value="1"/>
</dbReference>
<dbReference type="PROSITE" id="PS50142">
    <property type="entry name" value="RNASE_3_2"/>
    <property type="match status" value="1"/>
</dbReference>
<comment type="function">
    <text evidence="1">Digests double-stranded RNA. Involved in the processing of primary rRNA transcript to yield the immediate precursors to the large and small rRNAs (23S and 16S). Processes some mRNAs, and tRNAs when they are encoded in the rRNA operon. Processes pre-crRNA and tracrRNA of type II CRISPR loci if present in the organism.</text>
</comment>
<comment type="catalytic activity">
    <reaction evidence="1">
        <text>Endonucleolytic cleavage to 5'-phosphomonoester.</text>
        <dbReference type="EC" id="3.1.26.3"/>
    </reaction>
</comment>
<comment type="cofactor">
    <cofactor evidence="1">
        <name>Mg(2+)</name>
        <dbReference type="ChEBI" id="CHEBI:18420"/>
    </cofactor>
</comment>
<comment type="subunit">
    <text evidence="1">Homodimer.</text>
</comment>
<comment type="subcellular location">
    <subcellularLocation>
        <location evidence="1">Cytoplasm</location>
    </subcellularLocation>
</comment>
<comment type="similarity">
    <text evidence="1">Belongs to the ribonuclease III family.</text>
</comment>
<proteinExistence type="inferred from homology"/>
<reference key="1">
    <citation type="submission" date="2006-08" db="EMBL/GenBank/DDBJ databases">
        <title>Complete sequence of chromosome 1 of Shewanella sp. MR-7.</title>
        <authorList>
            <person name="Copeland A."/>
            <person name="Lucas S."/>
            <person name="Lapidus A."/>
            <person name="Barry K."/>
            <person name="Detter J.C."/>
            <person name="Glavina del Rio T."/>
            <person name="Hammon N."/>
            <person name="Israni S."/>
            <person name="Dalin E."/>
            <person name="Tice H."/>
            <person name="Pitluck S."/>
            <person name="Kiss H."/>
            <person name="Brettin T."/>
            <person name="Bruce D."/>
            <person name="Han C."/>
            <person name="Tapia R."/>
            <person name="Gilna P."/>
            <person name="Schmutz J."/>
            <person name="Larimer F."/>
            <person name="Land M."/>
            <person name="Hauser L."/>
            <person name="Kyrpides N."/>
            <person name="Mikhailova N."/>
            <person name="Nealson K."/>
            <person name="Konstantinidis K."/>
            <person name="Klappenbach J."/>
            <person name="Tiedje J."/>
            <person name="Richardson P."/>
        </authorList>
    </citation>
    <scope>NUCLEOTIDE SEQUENCE [LARGE SCALE GENOMIC DNA]</scope>
    <source>
        <strain>MR-7</strain>
    </source>
</reference>
<sequence length="226" mass="25321">MEPIKNLPRLCRTLGYEFKNLELLTQALTHRSAANKHNERLEFLGDSILSIVISDALYHQFPKATEGDLSRMRATLVRGDTLTLIAKAFKLGDYLFLGPGELKSGGFRRESILADAVEAIIGAIYLDSDLEVCRKLLLHWYAERLAEIQPGVNQKDAKTLLQEYLQGLKKPLPDYQVINIEGDAHDQTFTVECRIDDLSESVIGVASSRRKAEQIAAAQVLELLKK</sequence>
<protein>
    <recommendedName>
        <fullName evidence="1">Ribonuclease 3</fullName>
        <ecNumber evidence="1">3.1.26.3</ecNumber>
    </recommendedName>
    <alternativeName>
        <fullName evidence="1">Ribonuclease III</fullName>
        <shortName evidence="1">RNase III</shortName>
    </alternativeName>
</protein>
<name>RNC_SHESR</name>
<evidence type="ECO:0000255" key="1">
    <source>
        <dbReference type="HAMAP-Rule" id="MF_00104"/>
    </source>
</evidence>
<gene>
    <name evidence="1" type="primary">rnc</name>
    <name type="ordered locus">Shewmr7_2930</name>
</gene>
<feature type="chain" id="PRO_1000075820" description="Ribonuclease 3">
    <location>
        <begin position="1"/>
        <end position="226"/>
    </location>
</feature>
<feature type="domain" description="RNase III" evidence="1">
    <location>
        <begin position="7"/>
        <end position="129"/>
    </location>
</feature>
<feature type="domain" description="DRBM" evidence="1">
    <location>
        <begin position="156"/>
        <end position="226"/>
    </location>
</feature>
<feature type="active site" evidence="1">
    <location>
        <position position="46"/>
    </location>
</feature>
<feature type="active site" evidence="1">
    <location>
        <position position="118"/>
    </location>
</feature>
<feature type="binding site" evidence="1">
    <location>
        <position position="42"/>
    </location>
    <ligand>
        <name>Mg(2+)</name>
        <dbReference type="ChEBI" id="CHEBI:18420"/>
    </ligand>
</feature>
<feature type="binding site" evidence="1">
    <location>
        <position position="115"/>
    </location>
    <ligand>
        <name>Mg(2+)</name>
        <dbReference type="ChEBI" id="CHEBI:18420"/>
    </ligand>
</feature>
<feature type="binding site" evidence="1">
    <location>
        <position position="118"/>
    </location>
    <ligand>
        <name>Mg(2+)</name>
        <dbReference type="ChEBI" id="CHEBI:18420"/>
    </ligand>
</feature>
<accession>Q0HSJ1</accession>